<keyword id="KW-0028">Amino-acid biosynthesis</keyword>
<keyword id="KW-0057">Aromatic amino acid biosynthesis</keyword>
<keyword id="KW-0170">Cobalt</keyword>
<keyword id="KW-0963">Cytoplasm</keyword>
<keyword id="KW-0456">Lyase</keyword>
<keyword id="KW-0479">Metal-binding</keyword>
<keyword id="KW-0520">NAD</keyword>
<keyword id="KW-0547">Nucleotide-binding</keyword>
<keyword id="KW-0862">Zinc</keyword>
<dbReference type="EC" id="4.2.3.4" evidence="1"/>
<dbReference type="EMBL" id="CP001068">
    <property type="protein sequence ID" value="ACD28369.1"/>
    <property type="molecule type" value="Genomic_DNA"/>
</dbReference>
<dbReference type="SMR" id="B2UEG9"/>
<dbReference type="STRING" id="402626.Rpic_3247"/>
<dbReference type="KEGG" id="rpi:Rpic_3247"/>
<dbReference type="PATRIC" id="fig|402626.5.peg.4381"/>
<dbReference type="eggNOG" id="COG0337">
    <property type="taxonomic scope" value="Bacteria"/>
</dbReference>
<dbReference type="HOGENOM" id="CLU_001201_0_2_4"/>
<dbReference type="UniPathway" id="UPA00053">
    <property type="reaction ID" value="UER00085"/>
</dbReference>
<dbReference type="GO" id="GO:0005737">
    <property type="term" value="C:cytoplasm"/>
    <property type="evidence" value="ECO:0007669"/>
    <property type="project" value="UniProtKB-SubCell"/>
</dbReference>
<dbReference type="GO" id="GO:0003856">
    <property type="term" value="F:3-dehydroquinate synthase activity"/>
    <property type="evidence" value="ECO:0007669"/>
    <property type="project" value="UniProtKB-UniRule"/>
</dbReference>
<dbReference type="GO" id="GO:0046872">
    <property type="term" value="F:metal ion binding"/>
    <property type="evidence" value="ECO:0007669"/>
    <property type="project" value="UniProtKB-KW"/>
</dbReference>
<dbReference type="GO" id="GO:0000166">
    <property type="term" value="F:nucleotide binding"/>
    <property type="evidence" value="ECO:0007669"/>
    <property type="project" value="UniProtKB-KW"/>
</dbReference>
<dbReference type="GO" id="GO:0008652">
    <property type="term" value="P:amino acid biosynthetic process"/>
    <property type="evidence" value="ECO:0007669"/>
    <property type="project" value="UniProtKB-KW"/>
</dbReference>
<dbReference type="GO" id="GO:0009073">
    <property type="term" value="P:aromatic amino acid family biosynthetic process"/>
    <property type="evidence" value="ECO:0007669"/>
    <property type="project" value="UniProtKB-KW"/>
</dbReference>
<dbReference type="GO" id="GO:0009423">
    <property type="term" value="P:chorismate biosynthetic process"/>
    <property type="evidence" value="ECO:0007669"/>
    <property type="project" value="UniProtKB-UniRule"/>
</dbReference>
<dbReference type="CDD" id="cd08195">
    <property type="entry name" value="DHQS"/>
    <property type="match status" value="1"/>
</dbReference>
<dbReference type="FunFam" id="3.40.50.1970:FF:000001">
    <property type="entry name" value="3-dehydroquinate synthase"/>
    <property type="match status" value="1"/>
</dbReference>
<dbReference type="Gene3D" id="3.40.50.1970">
    <property type="match status" value="1"/>
</dbReference>
<dbReference type="Gene3D" id="1.20.1090.10">
    <property type="entry name" value="Dehydroquinate synthase-like - alpha domain"/>
    <property type="match status" value="1"/>
</dbReference>
<dbReference type="HAMAP" id="MF_00110">
    <property type="entry name" value="DHQ_synthase"/>
    <property type="match status" value="1"/>
</dbReference>
<dbReference type="InterPro" id="IPR050071">
    <property type="entry name" value="Dehydroquinate_synthase"/>
</dbReference>
<dbReference type="InterPro" id="IPR016037">
    <property type="entry name" value="DHQ_synth_AroB"/>
</dbReference>
<dbReference type="InterPro" id="IPR030963">
    <property type="entry name" value="DHQ_synth_fam"/>
</dbReference>
<dbReference type="InterPro" id="IPR030960">
    <property type="entry name" value="DHQS/DOIS_N"/>
</dbReference>
<dbReference type="InterPro" id="IPR056179">
    <property type="entry name" value="DHQS_C"/>
</dbReference>
<dbReference type="NCBIfam" id="TIGR01357">
    <property type="entry name" value="aroB"/>
    <property type="match status" value="1"/>
</dbReference>
<dbReference type="PANTHER" id="PTHR43622">
    <property type="entry name" value="3-DEHYDROQUINATE SYNTHASE"/>
    <property type="match status" value="1"/>
</dbReference>
<dbReference type="PANTHER" id="PTHR43622:SF7">
    <property type="entry name" value="3-DEHYDROQUINATE SYNTHASE, CHLOROPLASTIC"/>
    <property type="match status" value="1"/>
</dbReference>
<dbReference type="Pfam" id="PF01761">
    <property type="entry name" value="DHQ_synthase"/>
    <property type="match status" value="1"/>
</dbReference>
<dbReference type="Pfam" id="PF24621">
    <property type="entry name" value="DHQS_C"/>
    <property type="match status" value="1"/>
</dbReference>
<dbReference type="PIRSF" id="PIRSF001455">
    <property type="entry name" value="DHQ_synth"/>
    <property type="match status" value="1"/>
</dbReference>
<dbReference type="SUPFAM" id="SSF56796">
    <property type="entry name" value="Dehydroquinate synthase-like"/>
    <property type="match status" value="1"/>
</dbReference>
<accession>B2UEG9</accession>
<comment type="function">
    <text evidence="1">Catalyzes the conversion of 3-deoxy-D-arabino-heptulosonate 7-phosphate (DAHP) to dehydroquinate (DHQ).</text>
</comment>
<comment type="catalytic activity">
    <reaction evidence="1">
        <text>7-phospho-2-dehydro-3-deoxy-D-arabino-heptonate = 3-dehydroquinate + phosphate</text>
        <dbReference type="Rhea" id="RHEA:21968"/>
        <dbReference type="ChEBI" id="CHEBI:32364"/>
        <dbReference type="ChEBI" id="CHEBI:43474"/>
        <dbReference type="ChEBI" id="CHEBI:58394"/>
        <dbReference type="EC" id="4.2.3.4"/>
    </reaction>
</comment>
<comment type="cofactor">
    <cofactor evidence="1">
        <name>Co(2+)</name>
        <dbReference type="ChEBI" id="CHEBI:48828"/>
    </cofactor>
    <cofactor evidence="1">
        <name>Zn(2+)</name>
        <dbReference type="ChEBI" id="CHEBI:29105"/>
    </cofactor>
    <text evidence="1">Binds 1 divalent metal cation per subunit. Can use either Co(2+) or Zn(2+).</text>
</comment>
<comment type="cofactor">
    <cofactor evidence="1">
        <name>NAD(+)</name>
        <dbReference type="ChEBI" id="CHEBI:57540"/>
    </cofactor>
</comment>
<comment type="pathway">
    <text evidence="1">Metabolic intermediate biosynthesis; chorismate biosynthesis; chorismate from D-erythrose 4-phosphate and phosphoenolpyruvate: step 2/7.</text>
</comment>
<comment type="subcellular location">
    <subcellularLocation>
        <location evidence="1">Cytoplasm</location>
    </subcellularLocation>
</comment>
<comment type="similarity">
    <text evidence="1">Belongs to the sugar phosphate cyclases superfamily. Dehydroquinate synthase family.</text>
</comment>
<sequence>MITVDVDLGDRAYPIHIGSGLLSKAELFAPHIRGARAVIVTNETVAPLYAAKVEEAIRSLGKAVDTVVLPDGESFKKWDTLNRIFDALLTAGADRKTTLIALGGGVIGDMTGFAAACYMRGVPFIQVPTTLLSQVDSSVGGKTGINHPLGKNMIGAFHQPQAVLADIDTLRTLPARELAAGMAEVIKHGAIADADYFAWIEQNIRGLNDCDTDLMTEAVRGSVRIKAAVVAQDERETGLRATLNFGHTFGHAIEAGLGYGEWLHGEAVGCGMVMAADLSHRLGFIDIDTRNRITALTCAADLPTVAPALGVDRFIELMRVDKKAEAGEIKFVLLRKLGQAFVTTVPDADLRATLLHAVLRPPTEAPVA</sequence>
<protein>
    <recommendedName>
        <fullName evidence="1">3-dehydroquinate synthase</fullName>
        <shortName evidence="1">DHQS</shortName>
        <ecNumber evidence="1">4.2.3.4</ecNumber>
    </recommendedName>
</protein>
<organism>
    <name type="scientific">Ralstonia pickettii (strain 12J)</name>
    <dbReference type="NCBI Taxonomy" id="402626"/>
    <lineage>
        <taxon>Bacteria</taxon>
        <taxon>Pseudomonadati</taxon>
        <taxon>Pseudomonadota</taxon>
        <taxon>Betaproteobacteria</taxon>
        <taxon>Burkholderiales</taxon>
        <taxon>Burkholderiaceae</taxon>
        <taxon>Ralstonia</taxon>
    </lineage>
</organism>
<reference key="1">
    <citation type="submission" date="2008-05" db="EMBL/GenBank/DDBJ databases">
        <title>Complete sequence of chromosome 1 of Ralstonia pickettii 12J.</title>
        <authorList>
            <person name="Lucas S."/>
            <person name="Copeland A."/>
            <person name="Lapidus A."/>
            <person name="Glavina del Rio T."/>
            <person name="Dalin E."/>
            <person name="Tice H."/>
            <person name="Bruce D."/>
            <person name="Goodwin L."/>
            <person name="Pitluck S."/>
            <person name="Meincke L."/>
            <person name="Brettin T."/>
            <person name="Detter J.C."/>
            <person name="Han C."/>
            <person name="Kuske C.R."/>
            <person name="Schmutz J."/>
            <person name="Larimer F."/>
            <person name="Land M."/>
            <person name="Hauser L."/>
            <person name="Kyrpides N."/>
            <person name="Mikhailova N."/>
            <person name="Marsh T."/>
            <person name="Richardson P."/>
        </authorList>
    </citation>
    <scope>NUCLEOTIDE SEQUENCE [LARGE SCALE GENOMIC DNA]</scope>
    <source>
        <strain>12J</strain>
    </source>
</reference>
<proteinExistence type="inferred from homology"/>
<gene>
    <name evidence="1" type="primary">aroB</name>
    <name type="ordered locus">Rpic_3247</name>
</gene>
<feature type="chain" id="PRO_1000094580" description="3-dehydroquinate synthase">
    <location>
        <begin position="1"/>
        <end position="368"/>
    </location>
</feature>
<feature type="binding site" evidence="1">
    <location>
        <begin position="71"/>
        <end position="76"/>
    </location>
    <ligand>
        <name>NAD(+)</name>
        <dbReference type="ChEBI" id="CHEBI:57540"/>
    </ligand>
</feature>
<feature type="binding site" evidence="1">
    <location>
        <begin position="105"/>
        <end position="109"/>
    </location>
    <ligand>
        <name>NAD(+)</name>
        <dbReference type="ChEBI" id="CHEBI:57540"/>
    </ligand>
</feature>
<feature type="binding site" evidence="1">
    <location>
        <begin position="129"/>
        <end position="130"/>
    </location>
    <ligand>
        <name>NAD(+)</name>
        <dbReference type="ChEBI" id="CHEBI:57540"/>
    </ligand>
</feature>
<feature type="binding site" evidence="1">
    <location>
        <position position="142"/>
    </location>
    <ligand>
        <name>NAD(+)</name>
        <dbReference type="ChEBI" id="CHEBI:57540"/>
    </ligand>
</feature>
<feature type="binding site" evidence="1">
    <location>
        <position position="151"/>
    </location>
    <ligand>
        <name>NAD(+)</name>
        <dbReference type="ChEBI" id="CHEBI:57540"/>
    </ligand>
</feature>
<feature type="binding site" evidence="1">
    <location>
        <begin position="169"/>
        <end position="172"/>
    </location>
    <ligand>
        <name>NAD(+)</name>
        <dbReference type="ChEBI" id="CHEBI:57540"/>
    </ligand>
</feature>
<feature type="binding site" evidence="1">
    <location>
        <position position="184"/>
    </location>
    <ligand>
        <name>Zn(2+)</name>
        <dbReference type="ChEBI" id="CHEBI:29105"/>
    </ligand>
</feature>
<feature type="binding site" evidence="1">
    <location>
        <position position="247"/>
    </location>
    <ligand>
        <name>Zn(2+)</name>
        <dbReference type="ChEBI" id="CHEBI:29105"/>
    </ligand>
</feature>
<feature type="binding site" evidence="1">
    <location>
        <position position="264"/>
    </location>
    <ligand>
        <name>Zn(2+)</name>
        <dbReference type="ChEBI" id="CHEBI:29105"/>
    </ligand>
</feature>
<evidence type="ECO:0000255" key="1">
    <source>
        <dbReference type="HAMAP-Rule" id="MF_00110"/>
    </source>
</evidence>
<name>AROB_RALPJ</name>